<evidence type="ECO:0000250" key="1">
    <source>
        <dbReference type="UniProtKB" id="P30988"/>
    </source>
</evidence>
<evidence type="ECO:0000255" key="2"/>
<evidence type="ECO:0000303" key="3">
    <source>
    </source>
</evidence>
<evidence type="ECO:0000305" key="4"/>
<evidence type="ECO:0000312" key="5">
    <source>
        <dbReference type="MGI" id="MGI:101950"/>
    </source>
</evidence>
<accession>Q60755</accession>
<accession>F6X7J4</accession>
<accession>Q3UUL9</accession>
<accession>Q8CAB0</accession>
<keyword id="KW-0025">Alternative splicing</keyword>
<keyword id="KW-1003">Cell membrane</keyword>
<keyword id="KW-1015">Disulfide bond</keyword>
<keyword id="KW-0297">G-protein coupled receptor</keyword>
<keyword id="KW-0325">Glycoprotein</keyword>
<keyword id="KW-0472">Membrane</keyword>
<keyword id="KW-0675">Receptor</keyword>
<keyword id="KW-1185">Reference proteome</keyword>
<keyword id="KW-0732">Signal</keyword>
<keyword id="KW-0807">Transducer</keyword>
<keyword id="KW-0812">Transmembrane</keyword>
<keyword id="KW-1133">Transmembrane helix</keyword>
<proteinExistence type="evidence at transcript level"/>
<gene>
    <name evidence="5" type="primary">Calcr</name>
</gene>
<name>CALCR_MOUSE</name>
<dbReference type="EMBL" id="U18542">
    <property type="protein sequence ID" value="AAA69521.1"/>
    <property type="status" value="ALT_INIT"/>
    <property type="molecule type" value="mRNA"/>
</dbReference>
<dbReference type="EMBL" id="AK039161">
    <property type="protein sequence ID" value="BAC30261.1"/>
    <property type="molecule type" value="mRNA"/>
</dbReference>
<dbReference type="EMBL" id="AK162391">
    <property type="protein sequence ID" value="BAE36888.1"/>
    <property type="molecule type" value="mRNA"/>
</dbReference>
<dbReference type="EMBL" id="AK133983">
    <property type="protein sequence ID" value="BAE21967.1"/>
    <property type="molecule type" value="mRNA"/>
</dbReference>
<dbReference type="EMBL" id="AK138275">
    <property type="protein sequence ID" value="BAE23606.1"/>
    <property type="molecule type" value="mRNA"/>
</dbReference>
<dbReference type="EMBL" id="AC066688">
    <property type="status" value="NOT_ANNOTATED_CDS"/>
    <property type="molecule type" value="Genomic_DNA"/>
</dbReference>
<dbReference type="EMBL" id="AC161368">
    <property type="status" value="NOT_ANNOTATED_CDS"/>
    <property type="molecule type" value="Genomic_DNA"/>
</dbReference>
<dbReference type="EMBL" id="CH466533">
    <property type="protein sequence ID" value="EDL13991.1"/>
    <property type="molecule type" value="Genomic_DNA"/>
</dbReference>
<dbReference type="EMBL" id="CH466533">
    <property type="protein sequence ID" value="EDL13992.1"/>
    <property type="molecule type" value="Genomic_DNA"/>
</dbReference>
<dbReference type="EMBL" id="BC119232">
    <property type="protein sequence ID" value="AAI19233.1"/>
    <property type="molecule type" value="mRNA"/>
</dbReference>
<dbReference type="EMBL" id="BC119272">
    <property type="protein sequence ID" value="AAI19273.1"/>
    <property type="molecule type" value="mRNA"/>
</dbReference>
<dbReference type="CCDS" id="CCDS39416.1">
    <molecule id="Q60755-2"/>
</dbReference>
<dbReference type="CCDS" id="CCDS39417.1">
    <molecule id="Q60755-1"/>
</dbReference>
<dbReference type="PIR" id="I49154">
    <property type="entry name" value="I49154"/>
</dbReference>
<dbReference type="RefSeq" id="NP_001036190.1">
    <molecule id="Q60755-2"/>
    <property type="nucleotide sequence ID" value="NM_001042725.1"/>
</dbReference>
<dbReference type="RefSeq" id="NP_001342121.1">
    <molecule id="Q60755-2"/>
    <property type="nucleotide sequence ID" value="NM_001355192.1"/>
</dbReference>
<dbReference type="RefSeq" id="NP_001363947.1">
    <molecule id="Q60755-1"/>
    <property type="nucleotide sequence ID" value="NM_001377018.1"/>
</dbReference>
<dbReference type="RefSeq" id="NP_031614.2">
    <molecule id="Q60755-1"/>
    <property type="nucleotide sequence ID" value="NM_007588.2"/>
</dbReference>
<dbReference type="RefSeq" id="XP_006505035.1">
    <property type="nucleotide sequence ID" value="XM_006504972.1"/>
</dbReference>
<dbReference type="RefSeq" id="XP_006505036.1">
    <property type="nucleotide sequence ID" value="XM_006504973.2"/>
</dbReference>
<dbReference type="SMR" id="Q60755"/>
<dbReference type="ComplexPortal" id="CPX-3235">
    <property type="entry name" value="Amylin receptor 1 complex"/>
</dbReference>
<dbReference type="ComplexPortal" id="CPX-3236">
    <property type="entry name" value="Amylin receptor 2 complex"/>
</dbReference>
<dbReference type="ComplexPortal" id="CPX-3237">
    <property type="entry name" value="Amylin receptor 3 complex"/>
</dbReference>
<dbReference type="CORUM" id="Q60755"/>
<dbReference type="FunCoup" id="Q60755">
    <property type="interactions" value="449"/>
</dbReference>
<dbReference type="STRING" id="10090.ENSMUSP00000075070"/>
<dbReference type="GlyCosmos" id="Q60755">
    <property type="glycosylation" value="4 sites, No reported glycans"/>
</dbReference>
<dbReference type="GlyGen" id="Q60755">
    <property type="glycosylation" value="5 sites, 1 N-linked glycan (1 site)"/>
</dbReference>
<dbReference type="iPTMnet" id="Q60755"/>
<dbReference type="PhosphoSitePlus" id="Q60755"/>
<dbReference type="PaxDb" id="10090-ENSMUSP00000075070"/>
<dbReference type="Antibodypedia" id="15689">
    <property type="antibodies" value="417 antibodies from 23 providers"/>
</dbReference>
<dbReference type="DNASU" id="12311"/>
<dbReference type="Ensembl" id="ENSMUST00000075644.13">
    <molecule id="Q60755-1"/>
    <property type="protein sequence ID" value="ENSMUSP00000075070.7"/>
    <property type="gene ID" value="ENSMUSG00000023964.16"/>
</dbReference>
<dbReference type="Ensembl" id="ENSMUST00000115622.8">
    <molecule id="Q60755-2"/>
    <property type="protein sequence ID" value="ENSMUSP00000111285.2"/>
    <property type="gene ID" value="ENSMUSG00000023964.16"/>
</dbReference>
<dbReference type="Ensembl" id="ENSMUST00000168592.9">
    <molecule id="Q60755-2"/>
    <property type="protein sequence ID" value="ENSMUSP00000130243.3"/>
    <property type="gene ID" value="ENSMUSG00000023964.16"/>
</dbReference>
<dbReference type="Ensembl" id="ENSMUST00000170266.3">
    <molecule id="Q60755-1"/>
    <property type="protein sequence ID" value="ENSMUSP00000132124.3"/>
    <property type="gene ID" value="ENSMUSG00000023964.16"/>
</dbReference>
<dbReference type="Ensembl" id="ENSMUST00000171613.8">
    <molecule id="Q60755-2"/>
    <property type="protein sequence ID" value="ENSMUSP00000130083.2"/>
    <property type="gene ID" value="ENSMUSG00000023964.16"/>
</dbReference>
<dbReference type="GeneID" id="12311"/>
<dbReference type="KEGG" id="mmu:12311"/>
<dbReference type="UCSC" id="uc009ave.1">
    <molecule id="Q60755-2"/>
    <property type="organism name" value="mouse"/>
</dbReference>
<dbReference type="UCSC" id="uc009avf.1">
    <molecule id="Q60755-1"/>
    <property type="organism name" value="mouse"/>
</dbReference>
<dbReference type="AGR" id="MGI:101950"/>
<dbReference type="CTD" id="799"/>
<dbReference type="MGI" id="MGI:101950">
    <property type="gene designation" value="Calcr"/>
</dbReference>
<dbReference type="VEuPathDB" id="HostDB:ENSMUSG00000023964"/>
<dbReference type="eggNOG" id="KOG4564">
    <property type="taxonomic scope" value="Eukaryota"/>
</dbReference>
<dbReference type="GeneTree" id="ENSGT00940000155380"/>
<dbReference type="HOGENOM" id="CLU_002753_4_2_1"/>
<dbReference type="InParanoid" id="Q60755"/>
<dbReference type="OMA" id="NIPVYIC"/>
<dbReference type="OrthoDB" id="16753at2759"/>
<dbReference type="PhylomeDB" id="Q60755"/>
<dbReference type="TreeFam" id="TF315710"/>
<dbReference type="Reactome" id="R-MMU-418555">
    <property type="pathway name" value="G alpha (s) signalling events"/>
</dbReference>
<dbReference type="Reactome" id="R-MMU-419812">
    <property type="pathway name" value="Calcitonin-like ligand receptors"/>
</dbReference>
<dbReference type="BioGRID-ORCS" id="12311">
    <property type="hits" value="1 hit in 77 CRISPR screens"/>
</dbReference>
<dbReference type="ChiTaRS" id="Calcr">
    <property type="organism name" value="mouse"/>
</dbReference>
<dbReference type="PRO" id="PR:Q60755"/>
<dbReference type="Proteomes" id="UP000000589">
    <property type="component" value="Chromosome 6"/>
</dbReference>
<dbReference type="RNAct" id="Q60755">
    <property type="molecule type" value="protein"/>
</dbReference>
<dbReference type="Bgee" id="ENSMUSG00000023964">
    <property type="expression patterns" value="Expressed in arcuate nucleus of hypothalamus and 42 other cell types or tissues"/>
</dbReference>
<dbReference type="GO" id="GO:0001669">
    <property type="term" value="C:acrosomal vesicle"/>
    <property type="evidence" value="ECO:0000314"/>
    <property type="project" value="MGI"/>
</dbReference>
<dbReference type="GO" id="GO:0150056">
    <property type="term" value="C:amylin receptor complex 1"/>
    <property type="evidence" value="ECO:0007669"/>
    <property type="project" value="Ensembl"/>
</dbReference>
<dbReference type="GO" id="GO:0150057">
    <property type="term" value="C:amylin receptor complex 2"/>
    <property type="evidence" value="ECO:0007669"/>
    <property type="project" value="Ensembl"/>
</dbReference>
<dbReference type="GO" id="GO:0150058">
    <property type="term" value="C:amylin receptor complex 3"/>
    <property type="evidence" value="ECO:0007669"/>
    <property type="project" value="Ensembl"/>
</dbReference>
<dbReference type="GO" id="GO:0005929">
    <property type="term" value="C:cilium"/>
    <property type="evidence" value="ECO:0000314"/>
    <property type="project" value="MGI"/>
</dbReference>
<dbReference type="GO" id="GO:0097643">
    <property type="term" value="F:amylin receptor activity"/>
    <property type="evidence" value="ECO:0007669"/>
    <property type="project" value="Ensembl"/>
</dbReference>
<dbReference type="GO" id="GO:0001540">
    <property type="term" value="F:amyloid-beta binding"/>
    <property type="evidence" value="ECO:0007669"/>
    <property type="project" value="Ensembl"/>
</dbReference>
<dbReference type="GO" id="GO:0032841">
    <property type="term" value="F:calcitonin binding"/>
    <property type="evidence" value="ECO:0007669"/>
    <property type="project" value="Ensembl"/>
</dbReference>
<dbReference type="GO" id="GO:0001635">
    <property type="term" value="F:calcitonin gene-related peptide receptor activity"/>
    <property type="evidence" value="ECO:0007669"/>
    <property type="project" value="Ensembl"/>
</dbReference>
<dbReference type="GO" id="GO:0004948">
    <property type="term" value="F:calcitonin receptor activity"/>
    <property type="evidence" value="ECO:0000314"/>
    <property type="project" value="MGI"/>
</dbReference>
<dbReference type="GO" id="GO:0007189">
    <property type="term" value="P:adenylate cyclase-activating G protein-coupled receptor signaling pathway"/>
    <property type="evidence" value="ECO:0000314"/>
    <property type="project" value="MGI"/>
</dbReference>
<dbReference type="GO" id="GO:0150059">
    <property type="term" value="P:amylin receptor 1 signaling pathway"/>
    <property type="evidence" value="ECO:0007669"/>
    <property type="project" value="Ensembl"/>
</dbReference>
<dbReference type="GO" id="GO:0150060">
    <property type="term" value="P:amylin receptor 2 signaling pathway"/>
    <property type="evidence" value="ECO:0007669"/>
    <property type="project" value="Ensembl"/>
</dbReference>
<dbReference type="GO" id="GO:0150061">
    <property type="term" value="P:amylin receptor 3 signaling pathway"/>
    <property type="evidence" value="ECO:0007669"/>
    <property type="project" value="Ensembl"/>
</dbReference>
<dbReference type="GO" id="GO:0007166">
    <property type="term" value="P:cell surface receptor signaling pathway"/>
    <property type="evidence" value="ECO:0007669"/>
    <property type="project" value="InterPro"/>
</dbReference>
<dbReference type="GO" id="GO:0030279">
    <property type="term" value="P:negative regulation of ossification"/>
    <property type="evidence" value="ECO:0000315"/>
    <property type="project" value="MGI"/>
</dbReference>
<dbReference type="GO" id="GO:0001503">
    <property type="term" value="P:ossification"/>
    <property type="evidence" value="ECO:0000315"/>
    <property type="project" value="MGI"/>
</dbReference>
<dbReference type="GO" id="GO:0030316">
    <property type="term" value="P:osteoclast differentiation"/>
    <property type="evidence" value="ECO:0000314"/>
    <property type="project" value="MGI"/>
</dbReference>
<dbReference type="GO" id="GO:0050850">
    <property type="term" value="P:positive regulation of calcium-mediated signaling"/>
    <property type="evidence" value="ECO:0007669"/>
    <property type="project" value="Ensembl"/>
</dbReference>
<dbReference type="GO" id="GO:0141163">
    <property type="term" value="P:positive regulation of cAMP/PKA signal transduction"/>
    <property type="evidence" value="ECO:0007669"/>
    <property type="project" value="Ensembl"/>
</dbReference>
<dbReference type="GO" id="GO:0007204">
    <property type="term" value="P:positive regulation of cytosolic calcium ion concentration"/>
    <property type="evidence" value="ECO:0000314"/>
    <property type="project" value="MGI"/>
</dbReference>
<dbReference type="GO" id="GO:0070374">
    <property type="term" value="P:positive regulation of ERK1 and ERK2 cascade"/>
    <property type="evidence" value="ECO:0007669"/>
    <property type="project" value="Ensembl"/>
</dbReference>
<dbReference type="GO" id="GO:0010628">
    <property type="term" value="P:positive regulation of gene expression"/>
    <property type="evidence" value="ECO:0007669"/>
    <property type="project" value="Ensembl"/>
</dbReference>
<dbReference type="GO" id="GO:0051897">
    <property type="term" value="P:positive regulation of phosphatidylinositol 3-kinase/protein kinase B signal transduction"/>
    <property type="evidence" value="ECO:0007669"/>
    <property type="project" value="Ensembl"/>
</dbReference>
<dbReference type="GO" id="GO:0043488">
    <property type="term" value="P:regulation of mRNA stability"/>
    <property type="evidence" value="ECO:0000314"/>
    <property type="project" value="MGI"/>
</dbReference>
<dbReference type="GO" id="GO:1904645">
    <property type="term" value="P:response to amyloid-beta"/>
    <property type="evidence" value="ECO:0007669"/>
    <property type="project" value="Ensembl"/>
</dbReference>
<dbReference type="GO" id="GO:0051384">
    <property type="term" value="P:response to glucocorticoid"/>
    <property type="evidence" value="ECO:0007669"/>
    <property type="project" value="Ensembl"/>
</dbReference>
<dbReference type="CDD" id="cd15274">
    <property type="entry name" value="7tmB1_calcitonin_R"/>
    <property type="match status" value="1"/>
</dbReference>
<dbReference type="FunFam" id="4.10.1240.10:FF:000012">
    <property type="entry name" value="Calcitonin receptor"/>
    <property type="match status" value="1"/>
</dbReference>
<dbReference type="Gene3D" id="4.10.1240.10">
    <property type="entry name" value="GPCR, family 2, extracellular hormone receptor domain"/>
    <property type="match status" value="1"/>
</dbReference>
<dbReference type="Gene3D" id="1.20.1070.10">
    <property type="entry name" value="Rhodopsin 7-helix transmembrane proteins"/>
    <property type="match status" value="1"/>
</dbReference>
<dbReference type="InterPro" id="IPR050332">
    <property type="entry name" value="GPCR_2"/>
</dbReference>
<dbReference type="InterPro" id="IPR017981">
    <property type="entry name" value="GPCR_2-like_7TM"/>
</dbReference>
<dbReference type="InterPro" id="IPR001688">
    <property type="entry name" value="GPCR_2_calcitonin_rcpt"/>
</dbReference>
<dbReference type="InterPro" id="IPR003287">
    <property type="entry name" value="GPCR_2_calcitonin_rcpt_fam"/>
</dbReference>
<dbReference type="InterPro" id="IPR036445">
    <property type="entry name" value="GPCR_2_extracell_dom_sf"/>
</dbReference>
<dbReference type="InterPro" id="IPR001879">
    <property type="entry name" value="GPCR_2_extracellular_dom"/>
</dbReference>
<dbReference type="InterPro" id="IPR000832">
    <property type="entry name" value="GPCR_2_secretin-like"/>
</dbReference>
<dbReference type="InterPro" id="IPR017983">
    <property type="entry name" value="GPCR_2_secretin-like_CS"/>
</dbReference>
<dbReference type="PANTHER" id="PTHR45620:SF8">
    <property type="entry name" value="CALCITONIN RECEPTOR"/>
    <property type="match status" value="1"/>
</dbReference>
<dbReference type="PANTHER" id="PTHR45620">
    <property type="entry name" value="PDF RECEPTOR-LIKE PROTEIN-RELATED"/>
    <property type="match status" value="1"/>
</dbReference>
<dbReference type="Pfam" id="PF00002">
    <property type="entry name" value="7tm_2"/>
    <property type="match status" value="1"/>
</dbReference>
<dbReference type="Pfam" id="PF02793">
    <property type="entry name" value="HRM"/>
    <property type="match status" value="1"/>
</dbReference>
<dbReference type="PRINTS" id="PR00361">
    <property type="entry name" value="CALCITONINR"/>
</dbReference>
<dbReference type="PRINTS" id="PR01350">
    <property type="entry name" value="CTRFAMILY"/>
</dbReference>
<dbReference type="PRINTS" id="PR00249">
    <property type="entry name" value="GPCRSECRETIN"/>
</dbReference>
<dbReference type="SMART" id="SM00008">
    <property type="entry name" value="HormR"/>
    <property type="match status" value="1"/>
</dbReference>
<dbReference type="SUPFAM" id="SSF81321">
    <property type="entry name" value="Family A G protein-coupled receptor-like"/>
    <property type="match status" value="1"/>
</dbReference>
<dbReference type="SUPFAM" id="SSF111418">
    <property type="entry name" value="Hormone receptor domain"/>
    <property type="match status" value="1"/>
</dbReference>
<dbReference type="PROSITE" id="PS00649">
    <property type="entry name" value="G_PROTEIN_RECEP_F2_1"/>
    <property type="match status" value="1"/>
</dbReference>
<dbReference type="PROSITE" id="PS00650">
    <property type="entry name" value="G_PROTEIN_RECEP_F2_2"/>
    <property type="match status" value="1"/>
</dbReference>
<dbReference type="PROSITE" id="PS50227">
    <property type="entry name" value="G_PROTEIN_RECEP_F2_3"/>
    <property type="match status" value="1"/>
</dbReference>
<dbReference type="PROSITE" id="PS50261">
    <property type="entry name" value="G_PROTEIN_RECEP_F2_4"/>
    <property type="match status" value="1"/>
</dbReference>
<comment type="function">
    <text evidence="1">G protein-coupled receptor activated by ligand peptides amylin (IAPP), calcitonin (CT/CALCA) and calcitonin gene-related peptide type 1 (CGRP1/CALCA). CALCR interacts with receptor-activity-modifying proteins RAMP1, 2 and 3 to form receptor complexes AMYR1, 2 and 3, respectively. IAPP, CT and CGRP1 activate CALCR and AMYRs with distinct modes of receptor activation resulting in specific phenotypes. Ligand binding causes a conformation change that triggers signaling via guanine nucleotide-binding proteins (G proteins) and modulates the activity of downstream effectors. Activates cAMP-dependent pathway.</text>
</comment>
<comment type="subunit">
    <text evidence="1">Heterodimer of CALCR and RAMP1, RAMP2 or RAMP3; the receptor complexes function as AMYR1, AMYR2 and AMYR3 receptors, respectively, and respond to amylin/IAPP, calcitonin/CT and CGRP1 ligands. Interacts with GPRASP2.</text>
</comment>
<comment type="subcellular location">
    <subcellularLocation>
        <location evidence="1">Cell membrane</location>
        <topology evidence="1">Multi-pass membrane protein</topology>
    </subcellularLocation>
</comment>
<comment type="alternative products">
    <event type="alternative splicing"/>
    <isoform>
        <id>Q60755-1</id>
        <name>1</name>
        <sequence type="displayed"/>
    </isoform>
    <isoform>
        <id>Q60755-2</id>
        <name>2</name>
        <sequence type="described" ref="VSP_053294"/>
    </isoform>
</comment>
<comment type="similarity">
    <text evidence="4">Belongs to the G-protein coupled receptor 2 family.</text>
</comment>
<comment type="sequence caution" evidence="4">
    <conflict type="erroneous initiation">
        <sequence resource="EMBL-CDS" id="AAA69521"/>
    </conflict>
    <text>Truncated N-terminus.</text>
</comment>
<feature type="signal peptide" evidence="2">
    <location>
        <begin position="1"/>
        <end position="41"/>
    </location>
</feature>
<feature type="chain" id="PRO_0000012807" description="Calcitonin receptor">
    <location>
        <begin position="42"/>
        <end position="533"/>
    </location>
</feature>
<feature type="topological domain" description="Extracellular" evidence="4">
    <location>
        <begin position="42"/>
        <end position="163"/>
    </location>
</feature>
<feature type="transmembrane region" description="Helical; Name=1" evidence="1">
    <location>
        <begin position="164"/>
        <end position="186"/>
    </location>
</feature>
<feature type="topological domain" description="Cytoplasmic" evidence="4">
    <location>
        <begin position="187"/>
        <end position="198"/>
    </location>
</feature>
<feature type="transmembrane region" description="Helical; Name=2" evidence="1">
    <location>
        <begin position="199"/>
        <end position="219"/>
    </location>
</feature>
<feature type="topological domain" description="Extracellular" evidence="4">
    <location>
        <begin position="220"/>
        <end position="273"/>
    </location>
</feature>
<feature type="transmembrane region" description="Helical; Name=3" evidence="1">
    <location>
        <begin position="274"/>
        <end position="296"/>
    </location>
</feature>
<feature type="topological domain" description="Cytoplasmic" evidence="4">
    <location>
        <begin position="297"/>
        <end position="313"/>
    </location>
</feature>
<feature type="transmembrane region" description="Helical; Name=4" evidence="1">
    <location>
        <begin position="314"/>
        <end position="334"/>
    </location>
</feature>
<feature type="topological domain" description="Extracellular" evidence="4">
    <location>
        <begin position="335"/>
        <end position="350"/>
    </location>
</feature>
<feature type="transmembrane region" description="Helical; Name=5" evidence="1">
    <location>
        <begin position="351"/>
        <end position="374"/>
    </location>
</feature>
<feature type="topological domain" description="Cytoplasmic" evidence="4">
    <location>
        <begin position="375"/>
        <end position="394"/>
    </location>
</feature>
<feature type="transmembrane region" description="Helical; Name=6" evidence="1">
    <location>
        <begin position="395"/>
        <end position="413"/>
    </location>
</feature>
<feature type="topological domain" description="Extracellular" evidence="4">
    <location>
        <begin position="414"/>
        <end position="421"/>
    </location>
</feature>
<feature type="transmembrane region" description="Helical; Name=7" evidence="1">
    <location>
        <begin position="422"/>
        <end position="448"/>
    </location>
</feature>
<feature type="topological domain" description="Cytoplasmic" evidence="4">
    <location>
        <begin position="449"/>
        <end position="533"/>
    </location>
</feature>
<feature type="glycosylation site" description="N-linked (GlcNAc...) asparagine" evidence="2">
    <location>
        <position position="45"/>
    </location>
</feature>
<feature type="glycosylation site" description="N-linked (GlcNAc...) asparagine" evidence="2">
    <location>
        <position position="90"/>
    </location>
</feature>
<feature type="glycosylation site" description="N-linked (GlcNAc...) asparagine" evidence="2">
    <location>
        <position position="142"/>
    </location>
</feature>
<feature type="glycosylation site" description="N-linked (GlcNAc...) asparagine" evidence="2">
    <location>
        <position position="147"/>
    </location>
</feature>
<feature type="disulfide bond" evidence="1">
    <location>
        <begin position="72"/>
        <end position="98"/>
    </location>
</feature>
<feature type="disulfide bond" evidence="1">
    <location>
        <begin position="89"/>
        <end position="129"/>
    </location>
</feature>
<feature type="disulfide bond" evidence="1">
    <location>
        <begin position="112"/>
        <end position="151"/>
    </location>
</feature>
<feature type="disulfide bond" evidence="1">
    <location>
        <begin position="273"/>
        <end position="343"/>
    </location>
</feature>
<feature type="splice variant" id="VSP_053294" description="In isoform 2." evidence="3">
    <location>
        <begin position="234"/>
        <end position="270"/>
    </location>
</feature>
<feature type="sequence conflict" description="In Ref. 1; AAA69521." evidence="4" ref="1">
    <original>S</original>
    <variation>C</variation>
    <location>
        <position position="257"/>
    </location>
</feature>
<feature type="sequence conflict" description="In Ref. 1; AAA69521." evidence="4" ref="1">
    <location>
        <position position="473"/>
    </location>
</feature>
<sequence>MTPRRSRVKRRNLRKPKMRFLLVNRFTLLLLLLVSPTPVLQAPTNLTDSGLDQEPFLYLVGRKKLLDAQYKCYDRIHQLPSYEGEGLYCNRTWDGWMCWDDTPAGATAYQHCPDYFPDFDTAEKVSKYCDENGEWFRHPDSNRTWSNYTLCNAFTSEKLQNAYVLYYLALVGHSLSIAALVASMLIFWIFKNLSCQRVTLHKHMFLTYILNSIIIIIHLVEVVPNGDLVRRDPMHIFHHNTHMWTMQWELSPPLPLSAHEGKMDPHASEVISCKVLHFLHQYMMSCNYFWMLCEGIYLHTLIVMAVFTDEQRLRWYYLLGWGFPIVPTIIHAITRALYYNDNCWLSAETHLLYIIHGPVMVALVVNFFFLLNIVRVLVTKMRQTHEAESYMYLKAVKATMVLVPLLGIQFVVFPWRPSNKVLGKIYDYLMHSLIHFQGFFVATIYCFCNHEVQVTLKRQWTQFKIQWSQRWGRRRRPTNRVVSAPRAVAFAEPDGLPIYICHQEPRNPPISNNEGEESTEMIPMNVIQQDASA</sequence>
<protein>
    <recommendedName>
        <fullName evidence="4">Calcitonin receptor</fullName>
        <shortName>CT-R</shortName>
    </recommendedName>
</protein>
<organism>
    <name type="scientific">Mus musculus</name>
    <name type="common">Mouse</name>
    <dbReference type="NCBI Taxonomy" id="10090"/>
    <lineage>
        <taxon>Eukaryota</taxon>
        <taxon>Metazoa</taxon>
        <taxon>Chordata</taxon>
        <taxon>Craniata</taxon>
        <taxon>Vertebrata</taxon>
        <taxon>Euteleostomi</taxon>
        <taxon>Mammalia</taxon>
        <taxon>Eutheria</taxon>
        <taxon>Euarchontoglires</taxon>
        <taxon>Glires</taxon>
        <taxon>Rodentia</taxon>
        <taxon>Myomorpha</taxon>
        <taxon>Muroidea</taxon>
        <taxon>Muridae</taxon>
        <taxon>Murinae</taxon>
        <taxon>Mus</taxon>
        <taxon>Mus</taxon>
    </lineage>
</organism>
<reference key="1">
    <citation type="journal article" date="1994" name="Endocrinology">
        <title>Cloning and characterization of a mouse brain calcitonin receptor complementary deoxyribonucleic acid and mapping of the calcitonin receptor gene.</title>
        <authorList>
            <person name="Yamin M."/>
            <person name="Gorn A.H."/>
            <person name="Flannery M.R."/>
            <person name="Jenkins N.A."/>
            <person name="Gilbert D.J."/>
            <person name="Copeland N.G."/>
            <person name="Tapp D.R."/>
            <person name="Krane S.M."/>
            <person name="Goldring S.R."/>
        </authorList>
    </citation>
    <scope>NUCLEOTIDE SEQUENCE [MRNA] (ISOFORM 1)</scope>
    <source>
        <strain>BALB/cJ</strain>
        <tissue>Brain</tissue>
    </source>
</reference>
<reference key="2">
    <citation type="journal article" date="2005" name="Science">
        <title>The transcriptional landscape of the mammalian genome.</title>
        <authorList>
            <person name="Carninci P."/>
            <person name="Kasukawa T."/>
            <person name="Katayama S."/>
            <person name="Gough J."/>
            <person name="Frith M.C."/>
            <person name="Maeda N."/>
            <person name="Oyama R."/>
            <person name="Ravasi T."/>
            <person name="Lenhard B."/>
            <person name="Wells C."/>
            <person name="Kodzius R."/>
            <person name="Shimokawa K."/>
            <person name="Bajic V.B."/>
            <person name="Brenner S.E."/>
            <person name="Batalov S."/>
            <person name="Forrest A.R."/>
            <person name="Zavolan M."/>
            <person name="Davis M.J."/>
            <person name="Wilming L.G."/>
            <person name="Aidinis V."/>
            <person name="Allen J.E."/>
            <person name="Ambesi-Impiombato A."/>
            <person name="Apweiler R."/>
            <person name="Aturaliya R.N."/>
            <person name="Bailey T.L."/>
            <person name="Bansal M."/>
            <person name="Baxter L."/>
            <person name="Beisel K.W."/>
            <person name="Bersano T."/>
            <person name="Bono H."/>
            <person name="Chalk A.M."/>
            <person name="Chiu K.P."/>
            <person name="Choudhary V."/>
            <person name="Christoffels A."/>
            <person name="Clutterbuck D.R."/>
            <person name="Crowe M.L."/>
            <person name="Dalla E."/>
            <person name="Dalrymple B.P."/>
            <person name="de Bono B."/>
            <person name="Della Gatta G."/>
            <person name="di Bernardo D."/>
            <person name="Down T."/>
            <person name="Engstrom P."/>
            <person name="Fagiolini M."/>
            <person name="Faulkner G."/>
            <person name="Fletcher C.F."/>
            <person name="Fukushima T."/>
            <person name="Furuno M."/>
            <person name="Futaki S."/>
            <person name="Gariboldi M."/>
            <person name="Georgii-Hemming P."/>
            <person name="Gingeras T.R."/>
            <person name="Gojobori T."/>
            <person name="Green R.E."/>
            <person name="Gustincich S."/>
            <person name="Harbers M."/>
            <person name="Hayashi Y."/>
            <person name="Hensch T.K."/>
            <person name="Hirokawa N."/>
            <person name="Hill D."/>
            <person name="Huminiecki L."/>
            <person name="Iacono M."/>
            <person name="Ikeo K."/>
            <person name="Iwama A."/>
            <person name="Ishikawa T."/>
            <person name="Jakt M."/>
            <person name="Kanapin A."/>
            <person name="Katoh M."/>
            <person name="Kawasawa Y."/>
            <person name="Kelso J."/>
            <person name="Kitamura H."/>
            <person name="Kitano H."/>
            <person name="Kollias G."/>
            <person name="Krishnan S.P."/>
            <person name="Kruger A."/>
            <person name="Kummerfeld S.K."/>
            <person name="Kurochkin I.V."/>
            <person name="Lareau L.F."/>
            <person name="Lazarevic D."/>
            <person name="Lipovich L."/>
            <person name="Liu J."/>
            <person name="Liuni S."/>
            <person name="McWilliam S."/>
            <person name="Madan Babu M."/>
            <person name="Madera M."/>
            <person name="Marchionni L."/>
            <person name="Matsuda H."/>
            <person name="Matsuzawa S."/>
            <person name="Miki H."/>
            <person name="Mignone F."/>
            <person name="Miyake S."/>
            <person name="Morris K."/>
            <person name="Mottagui-Tabar S."/>
            <person name="Mulder N."/>
            <person name="Nakano N."/>
            <person name="Nakauchi H."/>
            <person name="Ng P."/>
            <person name="Nilsson R."/>
            <person name="Nishiguchi S."/>
            <person name="Nishikawa S."/>
            <person name="Nori F."/>
            <person name="Ohara O."/>
            <person name="Okazaki Y."/>
            <person name="Orlando V."/>
            <person name="Pang K.C."/>
            <person name="Pavan W.J."/>
            <person name="Pavesi G."/>
            <person name="Pesole G."/>
            <person name="Petrovsky N."/>
            <person name="Piazza S."/>
            <person name="Reed J."/>
            <person name="Reid J.F."/>
            <person name="Ring B.Z."/>
            <person name="Ringwald M."/>
            <person name="Rost B."/>
            <person name="Ruan Y."/>
            <person name="Salzberg S.L."/>
            <person name="Sandelin A."/>
            <person name="Schneider C."/>
            <person name="Schoenbach C."/>
            <person name="Sekiguchi K."/>
            <person name="Semple C.A."/>
            <person name="Seno S."/>
            <person name="Sessa L."/>
            <person name="Sheng Y."/>
            <person name="Shibata Y."/>
            <person name="Shimada H."/>
            <person name="Shimada K."/>
            <person name="Silva D."/>
            <person name="Sinclair B."/>
            <person name="Sperling S."/>
            <person name="Stupka E."/>
            <person name="Sugiura K."/>
            <person name="Sultana R."/>
            <person name="Takenaka Y."/>
            <person name="Taki K."/>
            <person name="Tammoja K."/>
            <person name="Tan S.L."/>
            <person name="Tang S."/>
            <person name="Taylor M.S."/>
            <person name="Tegner J."/>
            <person name="Teichmann S.A."/>
            <person name="Ueda H.R."/>
            <person name="van Nimwegen E."/>
            <person name="Verardo R."/>
            <person name="Wei C.L."/>
            <person name="Yagi K."/>
            <person name="Yamanishi H."/>
            <person name="Zabarovsky E."/>
            <person name="Zhu S."/>
            <person name="Zimmer A."/>
            <person name="Hide W."/>
            <person name="Bult C."/>
            <person name="Grimmond S.M."/>
            <person name="Teasdale R.D."/>
            <person name="Liu E.T."/>
            <person name="Brusic V."/>
            <person name="Quackenbush J."/>
            <person name="Wahlestedt C."/>
            <person name="Mattick J.S."/>
            <person name="Hume D.A."/>
            <person name="Kai C."/>
            <person name="Sasaki D."/>
            <person name="Tomaru Y."/>
            <person name="Fukuda S."/>
            <person name="Kanamori-Katayama M."/>
            <person name="Suzuki M."/>
            <person name="Aoki J."/>
            <person name="Arakawa T."/>
            <person name="Iida J."/>
            <person name="Imamura K."/>
            <person name="Itoh M."/>
            <person name="Kato T."/>
            <person name="Kawaji H."/>
            <person name="Kawagashira N."/>
            <person name="Kawashima T."/>
            <person name="Kojima M."/>
            <person name="Kondo S."/>
            <person name="Konno H."/>
            <person name="Nakano K."/>
            <person name="Ninomiya N."/>
            <person name="Nishio T."/>
            <person name="Okada M."/>
            <person name="Plessy C."/>
            <person name="Shibata K."/>
            <person name="Shiraki T."/>
            <person name="Suzuki S."/>
            <person name="Tagami M."/>
            <person name="Waki K."/>
            <person name="Watahiki A."/>
            <person name="Okamura-Oho Y."/>
            <person name="Suzuki H."/>
            <person name="Kawai J."/>
            <person name="Hayashizaki Y."/>
        </authorList>
    </citation>
    <scope>NUCLEOTIDE SEQUENCE [LARGE SCALE MRNA] (ISOFORMS 1 AND 2)</scope>
    <source>
        <strain>C57BL/6J</strain>
        <tissue>Diencephalon</tissue>
        <tissue>Hypothalamus</tissue>
    </source>
</reference>
<reference key="3">
    <citation type="journal article" date="2009" name="PLoS Biol.">
        <title>Lineage-specific biology revealed by a finished genome assembly of the mouse.</title>
        <authorList>
            <person name="Church D.M."/>
            <person name="Goodstadt L."/>
            <person name="Hillier L.W."/>
            <person name="Zody M.C."/>
            <person name="Goldstein S."/>
            <person name="She X."/>
            <person name="Bult C.J."/>
            <person name="Agarwala R."/>
            <person name="Cherry J.L."/>
            <person name="DiCuccio M."/>
            <person name="Hlavina W."/>
            <person name="Kapustin Y."/>
            <person name="Meric P."/>
            <person name="Maglott D."/>
            <person name="Birtle Z."/>
            <person name="Marques A.C."/>
            <person name="Graves T."/>
            <person name="Zhou S."/>
            <person name="Teague B."/>
            <person name="Potamousis K."/>
            <person name="Churas C."/>
            <person name="Place M."/>
            <person name="Herschleb J."/>
            <person name="Runnheim R."/>
            <person name="Forrest D."/>
            <person name="Amos-Landgraf J."/>
            <person name="Schwartz D.C."/>
            <person name="Cheng Z."/>
            <person name="Lindblad-Toh K."/>
            <person name="Eichler E.E."/>
            <person name="Ponting C.P."/>
        </authorList>
    </citation>
    <scope>NUCLEOTIDE SEQUENCE [LARGE SCALE GENOMIC DNA]</scope>
    <source>
        <strain>C57BL/6J</strain>
    </source>
</reference>
<reference key="4">
    <citation type="submission" date="2005-07" db="EMBL/GenBank/DDBJ databases">
        <authorList>
            <person name="Mural R.J."/>
            <person name="Adams M.D."/>
            <person name="Myers E.W."/>
            <person name="Smith H.O."/>
            <person name="Venter J.C."/>
        </authorList>
    </citation>
    <scope>NUCLEOTIDE SEQUENCE [LARGE SCALE GENOMIC DNA]</scope>
</reference>
<reference key="5">
    <citation type="journal article" date="2004" name="Genome Res.">
        <title>The status, quality, and expansion of the NIH full-length cDNA project: the Mammalian Gene Collection (MGC).</title>
        <authorList>
            <consortium name="The MGC Project Team"/>
        </authorList>
    </citation>
    <scope>NUCLEOTIDE SEQUENCE [LARGE SCALE MRNA] (ISOFORM 1)</scope>
    <source>
        <tissue>Brain</tissue>
    </source>
</reference>